<protein>
    <recommendedName>
        <fullName evidence="1">UPF0301 protein YqgE</fullName>
    </recommendedName>
</protein>
<evidence type="ECO:0000255" key="1">
    <source>
        <dbReference type="HAMAP-Rule" id="MF_00758"/>
    </source>
</evidence>
<feature type="chain" id="PRO_1000198268" description="UPF0301 protein YqgE">
    <location>
        <begin position="1"/>
        <end position="187"/>
    </location>
</feature>
<reference key="1">
    <citation type="journal article" date="2008" name="J. Bacteriol.">
        <title>The complete genome sequence of Escherichia coli DH10B: insights into the biology of a laboratory workhorse.</title>
        <authorList>
            <person name="Durfee T."/>
            <person name="Nelson R."/>
            <person name="Baldwin S."/>
            <person name="Plunkett G. III"/>
            <person name="Burland V."/>
            <person name="Mau B."/>
            <person name="Petrosino J.F."/>
            <person name="Qin X."/>
            <person name="Muzny D.M."/>
            <person name="Ayele M."/>
            <person name="Gibbs R.A."/>
            <person name="Csorgo B."/>
            <person name="Posfai G."/>
            <person name="Weinstock G.M."/>
            <person name="Blattner F.R."/>
        </authorList>
    </citation>
    <scope>NUCLEOTIDE SEQUENCE [LARGE SCALE GENOMIC DNA]</scope>
    <source>
        <strain>K12 / DH10B</strain>
    </source>
</reference>
<gene>
    <name evidence="1" type="primary">yqgE</name>
    <name type="ordered locus">ECDH10B_3123</name>
</gene>
<proteinExistence type="inferred from homology"/>
<accession>B1XFA8</accession>
<sequence length="187" mass="20686">MNLQHHFLIAMPALQDPIFRRSVVYICEHNTNGAMGIIVNKPLENLKIEGILEKLKITPEPRDESIRLDKPVMLGGPLAEDRGFILHTPPSNFASSIRISDNTVMTTSRDVLETLGTDKQPSDVLVALGYASWEKGQLEQEILDNAWLTAPADLNILFKTPIADRWREAAKLIGVDILTMPGVAGHA</sequence>
<dbReference type="EMBL" id="CP000948">
    <property type="protein sequence ID" value="ACB04042.1"/>
    <property type="molecule type" value="Genomic_DNA"/>
</dbReference>
<dbReference type="RefSeq" id="WP_001053178.1">
    <property type="nucleotide sequence ID" value="NC_010473.1"/>
</dbReference>
<dbReference type="SMR" id="B1XFA8"/>
<dbReference type="KEGG" id="ecd:ECDH10B_3123"/>
<dbReference type="HOGENOM" id="CLU_057596_1_0_6"/>
<dbReference type="GO" id="GO:0005829">
    <property type="term" value="C:cytosol"/>
    <property type="evidence" value="ECO:0007669"/>
    <property type="project" value="TreeGrafter"/>
</dbReference>
<dbReference type="FunFam" id="3.30.70.1300:FF:000001">
    <property type="entry name" value="UPF0301 protein YqgE"/>
    <property type="match status" value="1"/>
</dbReference>
<dbReference type="Gene3D" id="3.40.1740.10">
    <property type="entry name" value="VC0467-like"/>
    <property type="match status" value="1"/>
</dbReference>
<dbReference type="Gene3D" id="3.30.70.1300">
    <property type="entry name" value="VC0467-like domains"/>
    <property type="match status" value="1"/>
</dbReference>
<dbReference type="HAMAP" id="MF_00758">
    <property type="entry name" value="UPF0301"/>
    <property type="match status" value="1"/>
</dbReference>
<dbReference type="InterPro" id="IPR003774">
    <property type="entry name" value="AlgH-like"/>
</dbReference>
<dbReference type="NCBIfam" id="NF001266">
    <property type="entry name" value="PRK00228.1-1"/>
    <property type="match status" value="1"/>
</dbReference>
<dbReference type="PANTHER" id="PTHR30327">
    <property type="entry name" value="UNCHARACTERIZED PROTEIN YQGE"/>
    <property type="match status" value="1"/>
</dbReference>
<dbReference type="PANTHER" id="PTHR30327:SF1">
    <property type="entry name" value="UPF0301 PROTEIN YQGE"/>
    <property type="match status" value="1"/>
</dbReference>
<dbReference type="Pfam" id="PF02622">
    <property type="entry name" value="DUF179"/>
    <property type="match status" value="1"/>
</dbReference>
<dbReference type="SUPFAM" id="SSF143456">
    <property type="entry name" value="VC0467-like"/>
    <property type="match status" value="1"/>
</dbReference>
<organism>
    <name type="scientific">Escherichia coli (strain K12 / DH10B)</name>
    <dbReference type="NCBI Taxonomy" id="316385"/>
    <lineage>
        <taxon>Bacteria</taxon>
        <taxon>Pseudomonadati</taxon>
        <taxon>Pseudomonadota</taxon>
        <taxon>Gammaproteobacteria</taxon>
        <taxon>Enterobacterales</taxon>
        <taxon>Enterobacteriaceae</taxon>
        <taxon>Escherichia</taxon>
    </lineage>
</organism>
<comment type="similarity">
    <text evidence="1">Belongs to the UPF0301 (AlgH) family.</text>
</comment>
<name>YQGE_ECODH</name>